<organism>
    <name type="scientific">Gallus gallus</name>
    <name type="common">Chicken</name>
    <dbReference type="NCBI Taxonomy" id="9031"/>
    <lineage>
        <taxon>Eukaryota</taxon>
        <taxon>Metazoa</taxon>
        <taxon>Chordata</taxon>
        <taxon>Craniata</taxon>
        <taxon>Vertebrata</taxon>
        <taxon>Euteleostomi</taxon>
        <taxon>Archelosauria</taxon>
        <taxon>Archosauria</taxon>
        <taxon>Dinosauria</taxon>
        <taxon>Saurischia</taxon>
        <taxon>Theropoda</taxon>
        <taxon>Coelurosauria</taxon>
        <taxon>Aves</taxon>
        <taxon>Neognathae</taxon>
        <taxon>Galloanserae</taxon>
        <taxon>Galliformes</taxon>
        <taxon>Phasianidae</taxon>
        <taxon>Phasianinae</taxon>
        <taxon>Gallus</taxon>
    </lineage>
</organism>
<protein>
    <recommendedName>
        <fullName>Olfactomedin-like protein 3</fullName>
    </recommendedName>
    <alternativeName>
        <fullName>Olfactomedin-noelin-tiarin factor 1</fullName>
    </alternativeName>
</protein>
<keyword id="KW-0175">Coiled coil</keyword>
<keyword id="KW-0217">Developmental protein</keyword>
<keyword id="KW-1015">Disulfide bond</keyword>
<keyword id="KW-0325">Glycoprotein</keyword>
<keyword id="KW-1185">Reference proteome</keyword>
<keyword id="KW-0964">Secreted</keyword>
<keyword id="KW-0732">Signal</keyword>
<accession>Q25C36</accession>
<comment type="function">
    <text evidence="1">Secreted scaffold protein that plays an essential role in dorsoventral patterning during early development. Stabilizes axial formation by restricting chordin (CHRD) activity on the dorsal side. Acts by facilitating the association between the tolloid proteases and their substrate chordin (CHRD), leading to enhance chordin (CHRD) degradation (By similarity).</text>
</comment>
<comment type="subcellular location">
    <subcellularLocation>
        <location evidence="1">Secreted</location>
    </subcellularLocation>
</comment>
<comment type="developmental stage">
    <text evidence="4">Expression first appears at Hensen's node and subsequently in the axial and paraxial mesoderm. When the neural tube closes, strong expression is transiently found in the roof plate region from the rostral midbrain to the hindbrain.</text>
</comment>
<comment type="similarity">
    <text evidence="5">Belongs to the OLFML3 family.</text>
</comment>
<reference key="1">
    <citation type="journal article" date="2006" name="Mech. Dev.">
        <title>Functional analysis of chick ONT1 reveals distinguishable activities among olfactomedin-related signaling factors.</title>
        <authorList>
            <person name="Sakuragi M."/>
            <person name="Sasai N."/>
            <person name="Ikeya M."/>
            <person name="Kawada M."/>
            <person name="Onai T."/>
            <person name="Katahira T."/>
            <person name="Nakamura H."/>
            <person name="Sasai Y."/>
        </authorList>
    </citation>
    <scope>NUCLEOTIDE SEQUENCE [MRNA]</scope>
    <scope>DEVELOPMENTAL STAGE</scope>
</reference>
<evidence type="ECO:0000250" key="1"/>
<evidence type="ECO:0000255" key="2"/>
<evidence type="ECO:0000255" key="3">
    <source>
        <dbReference type="PROSITE-ProRule" id="PRU00446"/>
    </source>
</evidence>
<evidence type="ECO:0000269" key="4">
    <source>
    </source>
</evidence>
<evidence type="ECO:0000305" key="5"/>
<dbReference type="EMBL" id="AB236173">
    <property type="protein sequence ID" value="BAE91905.1"/>
    <property type="molecule type" value="mRNA"/>
</dbReference>
<dbReference type="RefSeq" id="NP_001035107.1">
    <property type="nucleotide sequence ID" value="NM_001040018.2"/>
</dbReference>
<dbReference type="SMR" id="Q25C36"/>
<dbReference type="FunCoup" id="Q25C36">
    <property type="interactions" value="200"/>
</dbReference>
<dbReference type="STRING" id="9031.ENSGALP00000003021"/>
<dbReference type="GlyCosmos" id="Q25C36">
    <property type="glycosylation" value="2 sites, No reported glycans"/>
</dbReference>
<dbReference type="GlyGen" id="Q25C36">
    <property type="glycosylation" value="2 sites"/>
</dbReference>
<dbReference type="PaxDb" id="9031-ENSGALP00000003021"/>
<dbReference type="Ensembl" id="ENSGALT00000151234">
    <property type="protein sequence ID" value="ENSGALP00000076448"/>
    <property type="gene ID" value="ENSGALG00000068447"/>
</dbReference>
<dbReference type="Ensembl" id="ENSGALT00010061918.1">
    <property type="protein sequence ID" value="ENSGALP00010038228.1"/>
    <property type="gene ID" value="ENSGALG00010025357.1"/>
</dbReference>
<dbReference type="GeneID" id="419882"/>
<dbReference type="KEGG" id="gga:419882"/>
<dbReference type="CTD" id="56944"/>
<dbReference type="VEuPathDB" id="HostDB:geneid_419882"/>
<dbReference type="eggNOG" id="KOG3545">
    <property type="taxonomic scope" value="Eukaryota"/>
</dbReference>
<dbReference type="GeneTree" id="ENSGT00940000158083"/>
<dbReference type="HOGENOM" id="CLU_035236_2_1_1"/>
<dbReference type="InParanoid" id="Q25C36"/>
<dbReference type="OMA" id="QQQFMEY"/>
<dbReference type="OrthoDB" id="8626508at2759"/>
<dbReference type="PhylomeDB" id="Q25C36"/>
<dbReference type="TreeFam" id="TF352000"/>
<dbReference type="PRO" id="PR:Q25C36"/>
<dbReference type="Proteomes" id="UP000000539">
    <property type="component" value="Chromosome 26"/>
</dbReference>
<dbReference type="Bgee" id="ENSGALG00000001956">
    <property type="expression patterns" value="Expressed in ovary and 12 other cell types or tissues"/>
</dbReference>
<dbReference type="GO" id="GO:0005615">
    <property type="term" value="C:extracellular space"/>
    <property type="evidence" value="ECO:0000318"/>
    <property type="project" value="GO_Central"/>
</dbReference>
<dbReference type="GO" id="GO:0007165">
    <property type="term" value="P:signal transduction"/>
    <property type="evidence" value="ECO:0000318"/>
    <property type="project" value="GO_Central"/>
</dbReference>
<dbReference type="InterPro" id="IPR003112">
    <property type="entry name" value="Olfac-like_dom"/>
</dbReference>
<dbReference type="InterPro" id="IPR050605">
    <property type="entry name" value="Olfactomedin-like_domain"/>
</dbReference>
<dbReference type="PANTHER" id="PTHR23192:SF8">
    <property type="entry name" value="OLFACTOMEDIN-LIKE PROTEIN 3"/>
    <property type="match status" value="1"/>
</dbReference>
<dbReference type="PANTHER" id="PTHR23192">
    <property type="entry name" value="OLFACTOMEDIN-RELATED"/>
    <property type="match status" value="1"/>
</dbReference>
<dbReference type="Pfam" id="PF02191">
    <property type="entry name" value="OLF"/>
    <property type="match status" value="1"/>
</dbReference>
<dbReference type="SMART" id="SM00284">
    <property type="entry name" value="OLF"/>
    <property type="match status" value="1"/>
</dbReference>
<dbReference type="PROSITE" id="PS51132">
    <property type="entry name" value="OLF"/>
    <property type="match status" value="1"/>
</dbReference>
<gene>
    <name type="primary">OLFML3</name>
    <name type="synonym">ONT1</name>
</gene>
<feature type="signal peptide" evidence="2">
    <location>
        <begin position="1"/>
        <end position="21"/>
    </location>
</feature>
<feature type="chain" id="PRO_0000361562" description="Olfactomedin-like protein 3">
    <location>
        <begin position="22"/>
        <end position="392"/>
    </location>
</feature>
<feature type="domain" description="Olfactomedin-like" evidence="3">
    <location>
        <begin position="132"/>
        <end position="388"/>
    </location>
</feature>
<feature type="coiled-coil region" evidence="2">
    <location>
        <begin position="25"/>
        <end position="99"/>
    </location>
</feature>
<feature type="glycosylation site" description="N-linked (GlcNAc...) asparagine" evidence="2">
    <location>
        <position position="175"/>
    </location>
</feature>
<feature type="glycosylation site" description="N-linked (GlcNAc...) asparagine" evidence="2">
    <location>
        <position position="235"/>
    </location>
</feature>
<feature type="disulfide bond" evidence="3">
    <location>
        <begin position="133"/>
        <end position="315"/>
    </location>
</feature>
<name>OLFL3_CHICK</name>
<sequence>MGPWRCLLLLPLLAAAPRAQQQQFMEYVERRLALLEERIAQWHDQSSRYSTELRDFKNQVLGMLETAEKEREALRAEAEGAAARVDRLEREVDYLETQNPAPPCVEVDEVLMEKQAATAKQRKNEKYTKLTDCSDTIASVRAMKILKRFGSSAGLWTKDAAGSSEKIYVFDGTANDTVYIFPRMREFTLFSATRRAARIKLPYPWVGTGHLVYGGYLYYIRQQGPFQVIKFDLANKTVVDSSVFPAEEQIPVFGLSPFTYIELAADEEGLWAIYATKENEKNICLAKLDPDSLDIEQMWDTPCPRENAEGAFVVCGALHVAYNTRLPSRSRVQCVFDVSGTLPPEEASLVYFPKRYGSHSSMKYSPRERQVYAWDDGYQIIYRMEMKKKLEV</sequence>
<proteinExistence type="evidence at transcript level"/>